<accession>Q09306</accession>
<accession>Q9UB22</accession>
<protein>
    <recommendedName>
        <fullName>Tubby protein homolog 1</fullName>
    </recommendedName>
</protein>
<keyword id="KW-0966">Cell projection</keyword>
<keyword id="KW-0145">Chemotaxis</keyword>
<keyword id="KW-0963">Cytoplasm</keyword>
<keyword id="KW-0443">Lipid metabolism</keyword>
<keyword id="KW-1185">Reference proteome</keyword>
<keyword id="KW-0716">Sensory transduction</keyword>
<name>TUB1_CAEEL</name>
<reference key="1">
    <citation type="submission" date="1999-04" db="EMBL/GenBank/DDBJ databases">
        <title>A tubby family member in Caenorhabditis elegans is required for normal sensory behavior.</title>
        <authorList>
            <person name="Nelson L."/>
            <person name="Basson M."/>
            <person name="Spoerke J."/>
            <person name="Liu L.X."/>
            <person name="Yan G."/>
            <person name="North M.A."/>
            <person name="Johnson C.D."/>
        </authorList>
    </citation>
    <scope>NUCLEOTIDE SEQUENCE [MRNA]</scope>
    <source>
        <strain>Bristol N2</strain>
    </source>
</reference>
<reference key="2">
    <citation type="journal article" date="1998" name="Science">
        <title>Genome sequence of the nematode C. elegans: a platform for investigating biology.</title>
        <authorList>
            <consortium name="The C. elegans sequencing consortium"/>
        </authorList>
    </citation>
    <scope>NUCLEOTIDE SEQUENCE [LARGE SCALE GENOMIC DNA]</scope>
    <source>
        <strain>Bristol N2</strain>
    </source>
</reference>
<reference key="3">
    <citation type="journal article" date="1989" name="J. Cell Biol.">
        <title>Genetic and molecular analysis of a Caenorhabditis elegans beta-tubulin that conveys benzimidazole sensitivity.</title>
        <authorList>
            <person name="Driscoll M."/>
            <person name="Dean E."/>
            <person name="Reilly E."/>
            <person name="Bergholz E."/>
            <person name="Chalfie M."/>
        </authorList>
    </citation>
    <scope>IDENTIFICATION</scope>
</reference>
<reference key="4">
    <citation type="journal article" date="2003" name="Nature">
        <title>Genome-wide RNAi analysis of Caenorhabditis elegans fat regulatory genes.</title>
        <authorList>
            <person name="Ashrafi K."/>
            <person name="Chang F.Y."/>
            <person name="Watts J.L."/>
            <person name="Fraser A.G."/>
            <person name="Kamath R.S."/>
            <person name="Ahringer J."/>
            <person name="Ruvkun G."/>
        </authorList>
    </citation>
    <scope>FUNCTION</scope>
    <scope>DISRUPTION PHENOTYPE</scope>
</reference>
<reference key="5">
    <citation type="journal article" date="2005" name="Cell Metab.">
        <title>C. elegans tubby regulates life span and fat storage by two independent mechanisms.</title>
        <authorList>
            <person name="Mukhopadhyay A."/>
            <person name="Deplancke B."/>
            <person name="Walhout A.J."/>
            <person name="Tissenbaum H.A."/>
        </authorList>
    </citation>
    <scope>FUNCTION</scope>
    <scope>INTERACTION WITH RGB-3</scope>
    <scope>SUBCELLULAR LOCATION</scope>
    <scope>TISSUE SPECIFICITY</scope>
</reference>
<reference key="6">
    <citation type="journal article" date="2005" name="Development">
        <title>Analysis of xbx genes in C. elegans.</title>
        <authorList>
            <person name="Efimenko E."/>
            <person name="Bubb K."/>
            <person name="Mak H.Y."/>
            <person name="Holzman T."/>
            <person name="Leroux M.R."/>
            <person name="Ruvkun G."/>
            <person name="Thomas J.H."/>
            <person name="Swoboda P."/>
        </authorList>
    </citation>
    <scope>FUNCTION</scope>
    <scope>SUBCELLULAR LOCATION</scope>
    <scope>TISSUE SPECIFICITY</scope>
</reference>
<reference key="7">
    <citation type="journal article" date="2006" name="Nat. Genet.">
        <title>Polygenic control of Caenorhabditis elegans fat storage.</title>
        <authorList>
            <person name="Mak H.Y."/>
            <person name="Nelson L.S."/>
            <person name="Basson M."/>
            <person name="Johnson C.D."/>
            <person name="Ruvkun G."/>
        </authorList>
    </citation>
    <scope>FUNCTION</scope>
    <scope>SUBCELLULAR LOCATION</scope>
    <scope>TISSUE SPECIFICITY</scope>
</reference>
<reference key="8">
    <citation type="journal article" date="2007" name="EMBO Rep.">
        <title>An endocytic pathway as a target of tubby for regulation of fat storage.</title>
        <authorList>
            <person name="Mukhopadhyay A."/>
            <person name="Pan X."/>
            <person name="Lambright D.G."/>
            <person name="Tissenbaum H.A."/>
        </authorList>
    </citation>
    <scope>FUNCTION</scope>
</reference>
<reference key="9">
    <citation type="journal article" date="2019" name="Elife">
        <title>The Caenorhabditis elegans Tubby homolog dynamically modulates olfactory cilia membrane morphogenesis and phospholipid composition.</title>
        <authorList>
            <person name="DiTirro D."/>
            <person name="Philbrook A."/>
            <person name="Rubino K."/>
            <person name="Sengupta P."/>
        </authorList>
    </citation>
    <scope>FUNCTION</scope>
    <scope>SUBCELLULAR LOCATION</scope>
    <scope>TISSUE SPECIFICITY</scope>
    <scope>DISRUPTION PHENOTYPE</scope>
    <scope>MUTAGENESIS OF LYS-250 AND ARG-252</scope>
</reference>
<comment type="function">
    <text evidence="2 3 4 5 6 7">Has a role in fat regulation independent of daf-16 (PubMed:12529643, PubMed:16462744, PubMed:17762880). Implicated in ciliar sensory function which is required for normal sensory behavior such as chemotaxis (PubMed:16462744). Required for extension and growth of sensory neuronal cilia during postembryonic development, potentially via mediating signaling protein transport and localization of PI(4,5)P2 to the ciliary base (PubMed:31259686). Functions in life span control via the insulin/IGF-1 pathway (PubMed:16054097). Thought to be involved in neuronal trafficking (PubMed:15790967).</text>
</comment>
<comment type="subunit">
    <text evidence="4">Interacts with rgb-3.</text>
</comment>
<comment type="subcellular location">
    <subcellularLocation>
        <location evidence="3 4 7">Cytoplasm</location>
    </subcellularLocation>
    <subcellularLocation>
        <location evidence="5">Cell projection</location>
        <location evidence="5">Axon</location>
    </subcellularLocation>
    <subcellularLocation>
        <location evidence="5">Cell projection</location>
        <location evidence="5">Dendrite</location>
    </subcellularLocation>
    <subcellularLocation>
        <location evidence="5 7">Cell projection</location>
        <location evidence="5 7">Cilium</location>
    </subcellularLocation>
    <text evidence="7">Expressed in the periciliary membrane compartment in AWB and ASK sensory neurons.</text>
</comment>
<comment type="tissue specificity">
    <text evidence="3 4 5 7">Expressed in ciliated sensory neurons.</text>
</comment>
<comment type="disruption phenotype">
    <text evidence="2 7">Twofold increase in fat content (PubMed:12529643). Extension in life span (PubMed:12529643). Defective in chemotaxis (PubMed:12529643). Reduces AWA cilia complexity and branching from the AWA periciliary membrane compartments (PCMC) (PubMed:31259686). AWB cilia are severely truncated due to elongation failure during postembryonic stages and AWC membraneous ciliary fans are significantly decreased (PubMed:31259686). Increase in localization of PtdIns(4,5)P2 and PPK-1 to the cilia base in AWB neurons (PubMed:31259686). Reduces lengths of ASH and ASI neuronal cilia (PubMed:31259686). Mislocalization of GPCR proteins to the (PCMC) in AWB sensory neurons, such as srbc-64, tax-4 and arl-13 (PubMed:31259686). Mislocalization of tax-2 to the distal dendritic ends of ASK neurons (PubMed:31259686). Decreases dpy-23 localization to the PCMC in AWB sensory neurons (PubMed:31259686).</text>
</comment>
<comment type="similarity">
    <text evidence="8">Belongs to the TUB family.</text>
</comment>
<sequence>MTDTNSQWIEMNLQRQRKMLEDKQKQKRHQSAGSVRTTSTAMSMNSMKDYPTFDNSLPFSISDNSSVSVSMNTPLIPTQDPIAQPRMQSMPRQQPQQVQESLISIGDYPDNDINAKLSKVNLTSCVVSDDEDEDKRSYADSPWNTDVVADRIPSEVLPDYNFIKNNLAKFVEDPAVEHCLYKCSITRQKSGVDKGMFPTYFLHLEEFDTDKRQKIFLLAARKRKKSTTANYLLSTDPTNLSREGEGYCAKVRSNALGTQFTVYDSGQNPKKTTNHAAIRQELAAVIYETNVLGFKGPRKMTIVMPGIEPPTENRPAVRCPVRPIQDKHTLLERYRLNDLDSLKILSNKSPQWNDETQSYVLNFHGRVTQASVKNFQIIHQSSPEYIVMQFGRISDDEFTMDFRYPLSAVQAFGIAMTSFHGKLACE</sequence>
<gene>
    <name evidence="9" type="primary">tub-1</name>
    <name evidence="9" type="ORF">F10B5.4</name>
</gene>
<evidence type="ECO:0000256" key="1">
    <source>
        <dbReference type="SAM" id="MobiDB-lite"/>
    </source>
</evidence>
<evidence type="ECO:0000269" key="2">
    <source>
    </source>
</evidence>
<evidence type="ECO:0000269" key="3">
    <source>
    </source>
</evidence>
<evidence type="ECO:0000269" key="4">
    <source>
    </source>
</evidence>
<evidence type="ECO:0000269" key="5">
    <source>
    </source>
</evidence>
<evidence type="ECO:0000269" key="6">
    <source>
    </source>
</evidence>
<evidence type="ECO:0000269" key="7">
    <source>
    </source>
</evidence>
<evidence type="ECO:0000305" key="8"/>
<evidence type="ECO:0000312" key="9">
    <source>
        <dbReference type="WormBase" id="F10B5.4"/>
    </source>
</evidence>
<feature type="chain" id="PRO_0000186474" description="Tubby protein homolog 1">
    <location>
        <begin position="1"/>
        <end position="426"/>
    </location>
</feature>
<feature type="region of interest" description="Required for localization to cilia in AWB sensory neurons" evidence="7">
    <location>
        <begin position="16"/>
        <end position="28"/>
    </location>
</feature>
<feature type="region of interest" description="Disordered" evidence="1">
    <location>
        <begin position="19"/>
        <end position="39"/>
    </location>
</feature>
<feature type="mutagenesis site" description="Abolishes localization to the periciliary membrane compartment in AWB sensory neurons; when associated with A-252." evidence="7">
    <original>K</original>
    <variation>A</variation>
    <location>
        <position position="250"/>
    </location>
</feature>
<feature type="mutagenesis site" description="Abolishes localization to the periciliary membrane compartment in AWB sensory neurons; when associated with A-250." evidence="7">
    <original>R</original>
    <variation>A</variation>
    <location>
        <position position="252"/>
    </location>
</feature>
<proteinExistence type="evidence at protein level"/>
<organism>
    <name type="scientific">Caenorhabditis elegans</name>
    <dbReference type="NCBI Taxonomy" id="6239"/>
    <lineage>
        <taxon>Eukaryota</taxon>
        <taxon>Metazoa</taxon>
        <taxon>Ecdysozoa</taxon>
        <taxon>Nematoda</taxon>
        <taxon>Chromadorea</taxon>
        <taxon>Rhabditida</taxon>
        <taxon>Rhabditina</taxon>
        <taxon>Rhabditomorpha</taxon>
        <taxon>Rhabditoidea</taxon>
        <taxon>Rhabditidae</taxon>
        <taxon>Peloderinae</taxon>
        <taxon>Caenorhabditis</taxon>
    </lineage>
</organism>
<dbReference type="EMBL" id="AF143297">
    <property type="protein sequence ID" value="AAD33902.1"/>
    <property type="molecule type" value="mRNA"/>
</dbReference>
<dbReference type="EMBL" id="Z48334">
    <property type="protein sequence ID" value="CAB61010.2"/>
    <property type="molecule type" value="Genomic_DNA"/>
</dbReference>
<dbReference type="RefSeq" id="NP_495710.1">
    <property type="nucleotide sequence ID" value="NM_063309.5"/>
</dbReference>
<dbReference type="SMR" id="Q09306"/>
<dbReference type="BioGRID" id="39641">
    <property type="interactions" value="3"/>
</dbReference>
<dbReference type="FunCoup" id="Q09306">
    <property type="interactions" value="528"/>
</dbReference>
<dbReference type="IntAct" id="Q09306">
    <property type="interactions" value="1"/>
</dbReference>
<dbReference type="STRING" id="6239.F10B5.4.1"/>
<dbReference type="PaxDb" id="6239-F10B5.4"/>
<dbReference type="PeptideAtlas" id="Q09306"/>
<dbReference type="EnsemblMetazoa" id="F10B5.4.1">
    <property type="protein sequence ID" value="F10B5.4.1"/>
    <property type="gene ID" value="WBGene00006655"/>
</dbReference>
<dbReference type="GeneID" id="174312"/>
<dbReference type="KEGG" id="cel:CELE_F10B5.4"/>
<dbReference type="UCSC" id="F10B5.4">
    <property type="organism name" value="c. elegans"/>
</dbReference>
<dbReference type="AGR" id="WB:WBGene00006655"/>
<dbReference type="CTD" id="174312"/>
<dbReference type="WormBase" id="F10B5.4">
    <property type="protein sequence ID" value="CE29091"/>
    <property type="gene ID" value="WBGene00006655"/>
    <property type="gene designation" value="tub-1"/>
</dbReference>
<dbReference type="eggNOG" id="KOG2502">
    <property type="taxonomic scope" value="Eukaryota"/>
</dbReference>
<dbReference type="GeneTree" id="ENSGT00940000158771"/>
<dbReference type="HOGENOM" id="CLU_028236_1_1_1"/>
<dbReference type="InParanoid" id="Q09306"/>
<dbReference type="OMA" id="KSPQWND"/>
<dbReference type="OrthoDB" id="8775810at2759"/>
<dbReference type="PhylomeDB" id="Q09306"/>
<dbReference type="Reactome" id="R-CEL-5610787">
    <property type="pathway name" value="Hedgehog 'off' state"/>
</dbReference>
<dbReference type="PRO" id="PR:Q09306"/>
<dbReference type="Proteomes" id="UP000001940">
    <property type="component" value="Chromosome II"/>
</dbReference>
<dbReference type="Bgee" id="WBGene00006655">
    <property type="expression patterns" value="Expressed in pharyngeal muscle cell (C elegans) and 3 other cell types or tissues"/>
</dbReference>
<dbReference type="GO" id="GO:0030424">
    <property type="term" value="C:axon"/>
    <property type="evidence" value="ECO:0007669"/>
    <property type="project" value="UniProtKB-SubCell"/>
</dbReference>
<dbReference type="GO" id="GO:0005929">
    <property type="term" value="C:cilium"/>
    <property type="evidence" value="ECO:0000318"/>
    <property type="project" value="GO_Central"/>
</dbReference>
<dbReference type="GO" id="GO:0005737">
    <property type="term" value="C:cytoplasm"/>
    <property type="evidence" value="ECO:0000314"/>
    <property type="project" value="UniProtKB"/>
</dbReference>
<dbReference type="GO" id="GO:0030425">
    <property type="term" value="C:dendrite"/>
    <property type="evidence" value="ECO:0007669"/>
    <property type="project" value="UniProtKB-SubCell"/>
</dbReference>
<dbReference type="GO" id="GO:0097730">
    <property type="term" value="C:non-motile cilium"/>
    <property type="evidence" value="ECO:0000314"/>
    <property type="project" value="UniProtKB"/>
</dbReference>
<dbReference type="GO" id="GO:1990075">
    <property type="term" value="C:periciliary membrane compartment"/>
    <property type="evidence" value="ECO:0000314"/>
    <property type="project" value="UniProtKB"/>
</dbReference>
<dbReference type="GO" id="GO:0006935">
    <property type="term" value="P:chemotaxis"/>
    <property type="evidence" value="ECO:0007669"/>
    <property type="project" value="UniProtKB-KW"/>
</dbReference>
<dbReference type="GO" id="GO:0006629">
    <property type="term" value="P:lipid metabolic process"/>
    <property type="evidence" value="ECO:0007669"/>
    <property type="project" value="UniProtKB-KW"/>
</dbReference>
<dbReference type="GO" id="GO:0050769">
    <property type="term" value="P:positive regulation of neurogenesis"/>
    <property type="evidence" value="ECO:0000315"/>
    <property type="project" value="UniProtKB"/>
</dbReference>
<dbReference type="GO" id="GO:0061512">
    <property type="term" value="P:protein localization to cilium"/>
    <property type="evidence" value="ECO:0000318"/>
    <property type="project" value="GO_Central"/>
</dbReference>
<dbReference type="GO" id="GO:0097499">
    <property type="term" value="P:protein localization to non-motile cilium"/>
    <property type="evidence" value="ECO:0000315"/>
    <property type="project" value="UniProtKB"/>
</dbReference>
<dbReference type="GO" id="GO:0097500">
    <property type="term" value="P:receptor localization to non-motile cilium"/>
    <property type="evidence" value="ECO:0000315"/>
    <property type="project" value="WormBase"/>
</dbReference>
<dbReference type="Gene3D" id="3.20.90.10">
    <property type="entry name" value="Tubby Protein, Chain A"/>
    <property type="match status" value="1"/>
</dbReference>
<dbReference type="InterPro" id="IPR025659">
    <property type="entry name" value="Tubby-like_C"/>
</dbReference>
<dbReference type="InterPro" id="IPR000007">
    <property type="entry name" value="Tubby_C"/>
</dbReference>
<dbReference type="InterPro" id="IPR018066">
    <property type="entry name" value="Tubby_C_CS"/>
</dbReference>
<dbReference type="PANTHER" id="PTHR16517:SF7">
    <property type="entry name" value="PROTEIN KING TUBBY"/>
    <property type="match status" value="1"/>
</dbReference>
<dbReference type="PANTHER" id="PTHR16517">
    <property type="entry name" value="TUBBY-RELATED"/>
    <property type="match status" value="1"/>
</dbReference>
<dbReference type="Pfam" id="PF01167">
    <property type="entry name" value="Tub"/>
    <property type="match status" value="1"/>
</dbReference>
<dbReference type="PRINTS" id="PR01573">
    <property type="entry name" value="SUPERTUBBY"/>
</dbReference>
<dbReference type="SUPFAM" id="SSF54518">
    <property type="entry name" value="Tubby C-terminal domain-like"/>
    <property type="match status" value="1"/>
</dbReference>
<dbReference type="PROSITE" id="PS01200">
    <property type="entry name" value="TUB_1"/>
    <property type="match status" value="1"/>
</dbReference>
<dbReference type="PROSITE" id="PS01201">
    <property type="entry name" value="TUB_2"/>
    <property type="match status" value="1"/>
</dbReference>